<protein>
    <recommendedName>
        <fullName>Protein N-terminal glutamine amidohydrolase</fullName>
        <ecNumber evidence="2">3.5.1.122</ecNumber>
    </recommendedName>
    <alternativeName>
        <fullName>Protein NH2-terminal glutamine deamidase</fullName>
        <shortName>N-terminal Gln amidase</shortName>
        <shortName>Nt(Q)-amidase</shortName>
    </alternativeName>
    <alternativeName>
        <fullName>Protein tungus</fullName>
    </alternativeName>
</protein>
<sequence length="205" mass="24006">MTTDFLFPKISDCSYVSCYCEENVWKLCEQVKRTRPEELSKCYAVFVSNEGRTVPLWRQKAGRGDDQVVIWDYHVFFIHNPLLNRCLVFDLDTTLPFPTYFHKYVTETFRSDLALRPEHHRFFRVIPADTYLIEFSSDRRHMRRPDGSWIKPPPSYPPILSNSNMHCLGDFICMSAGKGPGSVYSLSEFVQNFYKSPHVMAQNNK</sequence>
<feature type="chain" id="PRO_0000381826" description="Protein N-terminal glutamine amidohydrolase">
    <location>
        <begin position="1"/>
        <end position="205"/>
    </location>
</feature>
<feature type="active site" evidence="1">
    <location>
        <position position="20"/>
    </location>
</feature>
<feature type="active site" evidence="1">
    <location>
        <position position="74"/>
    </location>
</feature>
<feature type="active site" evidence="1">
    <location>
        <position position="90"/>
    </location>
</feature>
<reference key="1">
    <citation type="journal article" date="2000" name="Science">
        <title>The genome sequence of Drosophila melanogaster.</title>
        <authorList>
            <person name="Adams M.D."/>
            <person name="Celniker S.E."/>
            <person name="Holt R.A."/>
            <person name="Evans C.A."/>
            <person name="Gocayne J.D."/>
            <person name="Amanatides P.G."/>
            <person name="Scherer S.E."/>
            <person name="Li P.W."/>
            <person name="Hoskins R.A."/>
            <person name="Galle R.F."/>
            <person name="George R.A."/>
            <person name="Lewis S.E."/>
            <person name="Richards S."/>
            <person name="Ashburner M."/>
            <person name="Henderson S.N."/>
            <person name="Sutton G.G."/>
            <person name="Wortman J.R."/>
            <person name="Yandell M.D."/>
            <person name="Zhang Q."/>
            <person name="Chen L.X."/>
            <person name="Brandon R.C."/>
            <person name="Rogers Y.-H.C."/>
            <person name="Blazej R.G."/>
            <person name="Champe M."/>
            <person name="Pfeiffer B.D."/>
            <person name="Wan K.H."/>
            <person name="Doyle C."/>
            <person name="Baxter E.G."/>
            <person name="Helt G."/>
            <person name="Nelson C.R."/>
            <person name="Miklos G.L.G."/>
            <person name="Abril J.F."/>
            <person name="Agbayani A."/>
            <person name="An H.-J."/>
            <person name="Andrews-Pfannkoch C."/>
            <person name="Baldwin D."/>
            <person name="Ballew R.M."/>
            <person name="Basu A."/>
            <person name="Baxendale J."/>
            <person name="Bayraktaroglu L."/>
            <person name="Beasley E.M."/>
            <person name="Beeson K.Y."/>
            <person name="Benos P.V."/>
            <person name="Berman B.P."/>
            <person name="Bhandari D."/>
            <person name="Bolshakov S."/>
            <person name="Borkova D."/>
            <person name="Botchan M.R."/>
            <person name="Bouck J."/>
            <person name="Brokstein P."/>
            <person name="Brottier P."/>
            <person name="Burtis K.C."/>
            <person name="Busam D.A."/>
            <person name="Butler H."/>
            <person name="Cadieu E."/>
            <person name="Center A."/>
            <person name="Chandra I."/>
            <person name="Cherry J.M."/>
            <person name="Cawley S."/>
            <person name="Dahlke C."/>
            <person name="Davenport L.B."/>
            <person name="Davies P."/>
            <person name="de Pablos B."/>
            <person name="Delcher A."/>
            <person name="Deng Z."/>
            <person name="Mays A.D."/>
            <person name="Dew I."/>
            <person name="Dietz S.M."/>
            <person name="Dodson K."/>
            <person name="Doup L.E."/>
            <person name="Downes M."/>
            <person name="Dugan-Rocha S."/>
            <person name="Dunkov B.C."/>
            <person name="Dunn P."/>
            <person name="Durbin K.J."/>
            <person name="Evangelista C.C."/>
            <person name="Ferraz C."/>
            <person name="Ferriera S."/>
            <person name="Fleischmann W."/>
            <person name="Fosler C."/>
            <person name="Gabrielian A.E."/>
            <person name="Garg N.S."/>
            <person name="Gelbart W.M."/>
            <person name="Glasser K."/>
            <person name="Glodek A."/>
            <person name="Gong F."/>
            <person name="Gorrell J.H."/>
            <person name="Gu Z."/>
            <person name="Guan P."/>
            <person name="Harris M."/>
            <person name="Harris N.L."/>
            <person name="Harvey D.A."/>
            <person name="Heiman T.J."/>
            <person name="Hernandez J.R."/>
            <person name="Houck J."/>
            <person name="Hostin D."/>
            <person name="Houston K.A."/>
            <person name="Howland T.J."/>
            <person name="Wei M.-H."/>
            <person name="Ibegwam C."/>
            <person name="Jalali M."/>
            <person name="Kalush F."/>
            <person name="Karpen G.H."/>
            <person name="Ke Z."/>
            <person name="Kennison J.A."/>
            <person name="Ketchum K.A."/>
            <person name="Kimmel B.E."/>
            <person name="Kodira C.D."/>
            <person name="Kraft C.L."/>
            <person name="Kravitz S."/>
            <person name="Kulp D."/>
            <person name="Lai Z."/>
            <person name="Lasko P."/>
            <person name="Lei Y."/>
            <person name="Levitsky A.A."/>
            <person name="Li J.H."/>
            <person name="Li Z."/>
            <person name="Liang Y."/>
            <person name="Lin X."/>
            <person name="Liu X."/>
            <person name="Mattei B."/>
            <person name="McIntosh T.C."/>
            <person name="McLeod M.P."/>
            <person name="McPherson D."/>
            <person name="Merkulov G."/>
            <person name="Milshina N.V."/>
            <person name="Mobarry C."/>
            <person name="Morris J."/>
            <person name="Moshrefi A."/>
            <person name="Mount S.M."/>
            <person name="Moy M."/>
            <person name="Murphy B."/>
            <person name="Murphy L."/>
            <person name="Muzny D.M."/>
            <person name="Nelson D.L."/>
            <person name="Nelson D.R."/>
            <person name="Nelson K.A."/>
            <person name="Nixon K."/>
            <person name="Nusskern D.R."/>
            <person name="Pacleb J.M."/>
            <person name="Palazzolo M."/>
            <person name="Pittman G.S."/>
            <person name="Pan S."/>
            <person name="Pollard J."/>
            <person name="Puri V."/>
            <person name="Reese M.G."/>
            <person name="Reinert K."/>
            <person name="Remington K."/>
            <person name="Saunders R.D.C."/>
            <person name="Scheeler F."/>
            <person name="Shen H."/>
            <person name="Shue B.C."/>
            <person name="Siden-Kiamos I."/>
            <person name="Simpson M."/>
            <person name="Skupski M.P."/>
            <person name="Smith T.J."/>
            <person name="Spier E."/>
            <person name="Spradling A.C."/>
            <person name="Stapleton M."/>
            <person name="Strong R."/>
            <person name="Sun E."/>
            <person name="Svirskas R."/>
            <person name="Tector C."/>
            <person name="Turner R."/>
            <person name="Venter E."/>
            <person name="Wang A.H."/>
            <person name="Wang X."/>
            <person name="Wang Z.-Y."/>
            <person name="Wassarman D.A."/>
            <person name="Weinstock G.M."/>
            <person name="Weissenbach J."/>
            <person name="Williams S.M."/>
            <person name="Woodage T."/>
            <person name="Worley K.C."/>
            <person name="Wu D."/>
            <person name="Yang S."/>
            <person name="Yao Q.A."/>
            <person name="Ye J."/>
            <person name="Yeh R.-F."/>
            <person name="Zaveri J.S."/>
            <person name="Zhan M."/>
            <person name="Zhang G."/>
            <person name="Zhao Q."/>
            <person name="Zheng L."/>
            <person name="Zheng X.H."/>
            <person name="Zhong F.N."/>
            <person name="Zhong W."/>
            <person name="Zhou X."/>
            <person name="Zhu S.C."/>
            <person name="Zhu X."/>
            <person name="Smith H.O."/>
            <person name="Gibbs R.A."/>
            <person name="Myers E.W."/>
            <person name="Rubin G.M."/>
            <person name="Venter J.C."/>
        </authorList>
    </citation>
    <scope>NUCLEOTIDE SEQUENCE [LARGE SCALE GENOMIC DNA]</scope>
    <source>
        <strain>Berkeley</strain>
    </source>
</reference>
<reference key="2">
    <citation type="journal article" date="2002" name="Genome Biol.">
        <title>Annotation of the Drosophila melanogaster euchromatic genome: a systematic review.</title>
        <authorList>
            <person name="Misra S."/>
            <person name="Crosby M.A."/>
            <person name="Mungall C.J."/>
            <person name="Matthews B.B."/>
            <person name="Campbell K.S."/>
            <person name="Hradecky P."/>
            <person name="Huang Y."/>
            <person name="Kaminker J.S."/>
            <person name="Millburn G.H."/>
            <person name="Prochnik S.E."/>
            <person name="Smith C.D."/>
            <person name="Tupy J.L."/>
            <person name="Whitfield E.J."/>
            <person name="Bayraktaroglu L."/>
            <person name="Berman B.P."/>
            <person name="Bettencourt B.R."/>
            <person name="Celniker S.E."/>
            <person name="de Grey A.D.N.J."/>
            <person name="Drysdale R.A."/>
            <person name="Harris N.L."/>
            <person name="Richter J."/>
            <person name="Russo S."/>
            <person name="Schroeder A.J."/>
            <person name="Shu S.Q."/>
            <person name="Stapleton M."/>
            <person name="Yamada C."/>
            <person name="Ashburner M."/>
            <person name="Gelbart W.M."/>
            <person name="Rubin G.M."/>
            <person name="Lewis S.E."/>
        </authorList>
    </citation>
    <scope>GENOME REANNOTATION</scope>
    <source>
        <strain>Berkeley</strain>
    </source>
</reference>
<reference key="3">
    <citation type="journal article" date="2002" name="Genome Biol.">
        <title>A Drosophila full-length cDNA resource.</title>
        <authorList>
            <person name="Stapleton M."/>
            <person name="Carlson J.W."/>
            <person name="Brokstein P."/>
            <person name="Yu C."/>
            <person name="Champe M."/>
            <person name="George R.A."/>
            <person name="Guarin H."/>
            <person name="Kronmiller B."/>
            <person name="Pacleb J.M."/>
            <person name="Park S."/>
            <person name="Wan K.H."/>
            <person name="Rubin G.M."/>
            <person name="Celniker S.E."/>
        </authorList>
    </citation>
    <scope>NUCLEOTIDE SEQUENCE [LARGE SCALE MRNA]</scope>
    <source>
        <strain>Berkeley</strain>
        <tissue>Embryo</tissue>
    </source>
</reference>
<reference key="4">
    <citation type="journal article" date="2003" name="Curr. Biol.">
        <title>The staufen/pumilio pathway is involved in Drosophila long-term memory.</title>
        <authorList>
            <person name="Dubnau J."/>
            <person name="Chiang A.-S."/>
            <person name="Grady L."/>
            <person name="Barditch J."/>
            <person name="Gossweiler S."/>
            <person name="McNeil J."/>
            <person name="Smith P."/>
            <person name="Buldoc F."/>
            <person name="Scott R."/>
            <person name="Certa U."/>
            <person name="Broger C."/>
            <person name="Tully T."/>
        </authorList>
    </citation>
    <scope>DISRUPTION PHENOTYPE</scope>
</reference>
<accession>Q7K2Y9</accession>
<name>NTAQ1_DROME</name>
<comment type="function">
    <text evidence="2">Mediates the side-chain deamidation of N-terminal glutamine residues to glutamate, an important step in N-end rule pathway of protein degradation. Conversion of the resulting N-terminal glutamine to glutamate renders the protein susceptible to arginylation, polyubiquitination and degradation as specified by the N-end rule. Does not act on substrates with internal or C-terminal glutamine and does not act on non-glutamine residues in any position.</text>
</comment>
<comment type="catalytic activity">
    <reaction evidence="2">
        <text>N-terminal L-glutaminyl-[protein] + H2O = N-terminal L-glutamyl-[protein] + NH4(+)</text>
        <dbReference type="Rhea" id="RHEA:50680"/>
        <dbReference type="Rhea" id="RHEA-COMP:12668"/>
        <dbReference type="Rhea" id="RHEA-COMP:12777"/>
        <dbReference type="ChEBI" id="CHEBI:15377"/>
        <dbReference type="ChEBI" id="CHEBI:28938"/>
        <dbReference type="ChEBI" id="CHEBI:64721"/>
        <dbReference type="ChEBI" id="CHEBI:64722"/>
        <dbReference type="EC" id="3.5.1.122"/>
    </reaction>
</comment>
<comment type="subunit">
    <text evidence="3">Monomer.</text>
</comment>
<comment type="disruption phenotype">
    <text evidence="4">Defects in long term memory after olfactory learning.</text>
</comment>
<comment type="similarity">
    <text evidence="5">Belongs to the NTAQ1 family.</text>
</comment>
<dbReference type="EC" id="3.5.1.122" evidence="2"/>
<dbReference type="EMBL" id="AE013599">
    <property type="protein sequence ID" value="AAF58102.2"/>
    <property type="molecule type" value="Genomic_DNA"/>
</dbReference>
<dbReference type="EMBL" id="AY060439">
    <property type="protein sequence ID" value="AAL25478.1"/>
    <property type="molecule type" value="mRNA"/>
</dbReference>
<dbReference type="RefSeq" id="NP_001246351.1">
    <property type="nucleotide sequence ID" value="NM_001259422.2"/>
</dbReference>
<dbReference type="RefSeq" id="NP_001246352.1">
    <property type="nucleotide sequence ID" value="NM_001259423.2"/>
</dbReference>
<dbReference type="RefSeq" id="NP_001286468.1">
    <property type="nucleotide sequence ID" value="NM_001299539.1"/>
</dbReference>
<dbReference type="RefSeq" id="NP_611061.1">
    <property type="nucleotide sequence ID" value="NM_137217.3"/>
</dbReference>
<dbReference type="SMR" id="Q7K2Y9"/>
<dbReference type="BioGRID" id="62471">
    <property type="interactions" value="2"/>
</dbReference>
<dbReference type="FunCoup" id="Q7K2Y9">
    <property type="interactions" value="1513"/>
</dbReference>
<dbReference type="IntAct" id="Q7K2Y9">
    <property type="interactions" value="3"/>
</dbReference>
<dbReference type="STRING" id="7227.FBpp0300971"/>
<dbReference type="PaxDb" id="7227-FBpp0300971"/>
<dbReference type="DNASU" id="36743"/>
<dbReference type="EnsemblMetazoa" id="FBtr0087287">
    <property type="protein sequence ID" value="FBpp0086423"/>
    <property type="gene ID" value="FBgn0034046"/>
</dbReference>
<dbReference type="EnsemblMetazoa" id="FBtr0308814">
    <property type="protein sequence ID" value="FBpp0300971"/>
    <property type="gene ID" value="FBgn0034046"/>
</dbReference>
<dbReference type="EnsemblMetazoa" id="FBtr0308815">
    <property type="protein sequence ID" value="FBpp0300972"/>
    <property type="gene ID" value="FBgn0034046"/>
</dbReference>
<dbReference type="EnsemblMetazoa" id="FBtr0340013">
    <property type="protein sequence ID" value="FBpp0309027"/>
    <property type="gene ID" value="FBgn0034046"/>
</dbReference>
<dbReference type="GeneID" id="36743"/>
<dbReference type="KEGG" id="dme:Dmel_CG8253"/>
<dbReference type="UCSC" id="CG8253-RA">
    <property type="organism name" value="d. melanogaster"/>
</dbReference>
<dbReference type="AGR" id="FB:FBgn0034046"/>
<dbReference type="CTD" id="36743"/>
<dbReference type="FlyBase" id="FBgn0034046">
    <property type="gene designation" value="tun"/>
</dbReference>
<dbReference type="VEuPathDB" id="VectorBase:FBgn0034046"/>
<dbReference type="eggNOG" id="KOG3261">
    <property type="taxonomic scope" value="Eukaryota"/>
</dbReference>
<dbReference type="GeneTree" id="ENSGT00390000014398"/>
<dbReference type="HOGENOM" id="CLU_091083_1_0_1"/>
<dbReference type="InParanoid" id="Q7K2Y9"/>
<dbReference type="OMA" id="GWGTVYS"/>
<dbReference type="OrthoDB" id="191192at2759"/>
<dbReference type="PhylomeDB" id="Q7K2Y9"/>
<dbReference type="BRENDA" id="3.5.1.122">
    <property type="organism ID" value="1994"/>
</dbReference>
<dbReference type="BioGRID-ORCS" id="36743">
    <property type="hits" value="0 hits in 1 CRISPR screen"/>
</dbReference>
<dbReference type="ChiTaRS" id="Zasp52">
    <property type="organism name" value="fly"/>
</dbReference>
<dbReference type="GenomeRNAi" id="36743"/>
<dbReference type="PRO" id="PR:Q7K2Y9"/>
<dbReference type="Proteomes" id="UP000000803">
    <property type="component" value="Chromosome 2R"/>
</dbReference>
<dbReference type="Bgee" id="FBgn0034046">
    <property type="expression patterns" value="Expressed in mechanosensory neuron (Drosophila) in imaginal disc-derived wing and 233 other cell types or tissues"/>
</dbReference>
<dbReference type="ExpressionAtlas" id="Q7K2Y9">
    <property type="expression patterns" value="baseline and differential"/>
</dbReference>
<dbReference type="GO" id="GO:0005829">
    <property type="term" value="C:cytosol"/>
    <property type="evidence" value="ECO:0000318"/>
    <property type="project" value="GO_Central"/>
</dbReference>
<dbReference type="GO" id="GO:0005634">
    <property type="term" value="C:nucleus"/>
    <property type="evidence" value="ECO:0000318"/>
    <property type="project" value="GO_Central"/>
</dbReference>
<dbReference type="GO" id="GO:0008418">
    <property type="term" value="F:protein-N-terminal asparagine amidohydrolase activity"/>
    <property type="evidence" value="ECO:0007669"/>
    <property type="project" value="InterPro"/>
</dbReference>
<dbReference type="GO" id="GO:0070773">
    <property type="term" value="F:protein-N-terminal glutamine amidohydrolase activity"/>
    <property type="evidence" value="ECO:0000318"/>
    <property type="project" value="GO_Central"/>
</dbReference>
<dbReference type="FunFam" id="3.10.620.10:FF:000001">
    <property type="entry name" value="Blast:Protein N-terminal glutamine amidohydrolase"/>
    <property type="match status" value="1"/>
</dbReference>
<dbReference type="Gene3D" id="3.10.620.10">
    <property type="entry name" value="Protein N-terminal glutamine amidohydrolase, alpha beta roll"/>
    <property type="match status" value="1"/>
</dbReference>
<dbReference type="InterPro" id="IPR037132">
    <property type="entry name" value="N_Gln_amidohydro_ab_roll_sf"/>
</dbReference>
<dbReference type="InterPro" id="IPR039733">
    <property type="entry name" value="NTAQ1"/>
</dbReference>
<dbReference type="InterPro" id="IPR023128">
    <property type="entry name" value="Prot_N_Gln_amidohydro_ab_roll"/>
</dbReference>
<dbReference type="PANTHER" id="PTHR13035">
    <property type="entry name" value="PROTEIN N-TERMINAL GLUTAMINE AMIDOHYDROLASE"/>
    <property type="match status" value="1"/>
</dbReference>
<dbReference type="PANTHER" id="PTHR13035:SF0">
    <property type="entry name" value="PROTEIN N-TERMINAL GLUTAMINE AMIDOHYDROLASE"/>
    <property type="match status" value="1"/>
</dbReference>
<dbReference type="Pfam" id="PF09764">
    <property type="entry name" value="Nt_Gln_amidase"/>
    <property type="match status" value="1"/>
</dbReference>
<evidence type="ECO:0000250" key="1"/>
<evidence type="ECO:0000250" key="2">
    <source>
        <dbReference type="UniProtKB" id="Q80WB5"/>
    </source>
</evidence>
<evidence type="ECO:0000250" key="3">
    <source>
        <dbReference type="UniProtKB" id="Q96HA8"/>
    </source>
</evidence>
<evidence type="ECO:0000269" key="4">
    <source>
    </source>
</evidence>
<evidence type="ECO:0000305" key="5"/>
<organism>
    <name type="scientific">Drosophila melanogaster</name>
    <name type="common">Fruit fly</name>
    <dbReference type="NCBI Taxonomy" id="7227"/>
    <lineage>
        <taxon>Eukaryota</taxon>
        <taxon>Metazoa</taxon>
        <taxon>Ecdysozoa</taxon>
        <taxon>Arthropoda</taxon>
        <taxon>Hexapoda</taxon>
        <taxon>Insecta</taxon>
        <taxon>Pterygota</taxon>
        <taxon>Neoptera</taxon>
        <taxon>Endopterygota</taxon>
        <taxon>Diptera</taxon>
        <taxon>Brachycera</taxon>
        <taxon>Muscomorpha</taxon>
        <taxon>Ephydroidea</taxon>
        <taxon>Drosophilidae</taxon>
        <taxon>Drosophila</taxon>
        <taxon>Sophophora</taxon>
    </lineage>
</organism>
<keyword id="KW-0378">Hydrolase</keyword>
<keyword id="KW-1185">Reference proteome</keyword>
<gene>
    <name type="primary">tun</name>
    <name type="ORF">CG8253</name>
</gene>
<proteinExistence type="evidence at transcript level"/>